<accession>Q8GZ63</accession>
<accession>F4JY72</accession>
<reference key="1">
    <citation type="journal article" date="2000" name="Nature">
        <title>Sequence and analysis of chromosome 5 of the plant Arabidopsis thaliana.</title>
        <authorList>
            <person name="Tabata S."/>
            <person name="Kaneko T."/>
            <person name="Nakamura Y."/>
            <person name="Kotani H."/>
            <person name="Kato T."/>
            <person name="Asamizu E."/>
            <person name="Miyajima N."/>
            <person name="Sasamoto S."/>
            <person name="Kimura T."/>
            <person name="Hosouchi T."/>
            <person name="Kawashima K."/>
            <person name="Kohara M."/>
            <person name="Matsumoto M."/>
            <person name="Matsuno A."/>
            <person name="Muraki A."/>
            <person name="Nakayama S."/>
            <person name="Nakazaki N."/>
            <person name="Naruo K."/>
            <person name="Okumura S."/>
            <person name="Shinpo S."/>
            <person name="Takeuchi C."/>
            <person name="Wada T."/>
            <person name="Watanabe A."/>
            <person name="Yamada M."/>
            <person name="Yasuda M."/>
            <person name="Sato S."/>
            <person name="de la Bastide M."/>
            <person name="Huang E."/>
            <person name="Spiegel L."/>
            <person name="Gnoj L."/>
            <person name="O'Shaughnessy A."/>
            <person name="Preston R."/>
            <person name="Habermann K."/>
            <person name="Murray J."/>
            <person name="Johnson D."/>
            <person name="Rohlfing T."/>
            <person name="Nelson J."/>
            <person name="Stoneking T."/>
            <person name="Pepin K."/>
            <person name="Spieth J."/>
            <person name="Sekhon M."/>
            <person name="Armstrong J."/>
            <person name="Becker M."/>
            <person name="Belter E."/>
            <person name="Cordum H."/>
            <person name="Cordes M."/>
            <person name="Courtney L."/>
            <person name="Courtney W."/>
            <person name="Dante M."/>
            <person name="Du H."/>
            <person name="Edwards J."/>
            <person name="Fryman J."/>
            <person name="Haakensen B."/>
            <person name="Lamar E."/>
            <person name="Latreille P."/>
            <person name="Leonard S."/>
            <person name="Meyer R."/>
            <person name="Mulvaney E."/>
            <person name="Ozersky P."/>
            <person name="Riley A."/>
            <person name="Strowmatt C."/>
            <person name="Wagner-McPherson C."/>
            <person name="Wollam A."/>
            <person name="Yoakum M."/>
            <person name="Bell M."/>
            <person name="Dedhia N."/>
            <person name="Parnell L."/>
            <person name="Shah R."/>
            <person name="Rodriguez M."/>
            <person name="Hoon See L."/>
            <person name="Vil D."/>
            <person name="Baker J."/>
            <person name="Kirchoff K."/>
            <person name="Toth K."/>
            <person name="King L."/>
            <person name="Bahret A."/>
            <person name="Miller B."/>
            <person name="Marra M.A."/>
            <person name="Martienssen R."/>
            <person name="McCombie W.R."/>
            <person name="Wilson R.K."/>
            <person name="Murphy G."/>
            <person name="Bancroft I."/>
            <person name="Volckaert G."/>
            <person name="Wambutt R."/>
            <person name="Duesterhoeft A."/>
            <person name="Stiekema W."/>
            <person name="Pohl T."/>
            <person name="Entian K.-D."/>
            <person name="Terryn N."/>
            <person name="Hartley N."/>
            <person name="Bent E."/>
            <person name="Johnson S."/>
            <person name="Langham S.-A."/>
            <person name="McCullagh B."/>
            <person name="Robben J."/>
            <person name="Grymonprez B."/>
            <person name="Zimmermann W."/>
            <person name="Ramsperger U."/>
            <person name="Wedler H."/>
            <person name="Balke K."/>
            <person name="Wedler E."/>
            <person name="Peters S."/>
            <person name="van Staveren M."/>
            <person name="Dirkse W."/>
            <person name="Mooijman P."/>
            <person name="Klein Lankhorst R."/>
            <person name="Weitzenegger T."/>
            <person name="Bothe G."/>
            <person name="Rose M."/>
            <person name="Hauf J."/>
            <person name="Berneiser S."/>
            <person name="Hempel S."/>
            <person name="Feldpausch M."/>
            <person name="Lamberth S."/>
            <person name="Villarroel R."/>
            <person name="Gielen J."/>
            <person name="Ardiles W."/>
            <person name="Bents O."/>
            <person name="Lemcke K."/>
            <person name="Kolesov G."/>
            <person name="Mayer K.F.X."/>
            <person name="Rudd S."/>
            <person name="Schoof H."/>
            <person name="Schueller C."/>
            <person name="Zaccaria P."/>
            <person name="Mewes H.-W."/>
            <person name="Bevan M."/>
            <person name="Fransz P.F."/>
        </authorList>
    </citation>
    <scope>NUCLEOTIDE SEQUENCE [LARGE SCALE GENOMIC DNA]</scope>
    <source>
        <strain>cv. Columbia</strain>
    </source>
</reference>
<reference key="2">
    <citation type="journal article" date="2017" name="Plant J.">
        <title>Araport11: a complete reannotation of the Arabidopsis thaliana reference genome.</title>
        <authorList>
            <person name="Cheng C.Y."/>
            <person name="Krishnakumar V."/>
            <person name="Chan A.P."/>
            <person name="Thibaud-Nissen F."/>
            <person name="Schobel S."/>
            <person name="Town C.D."/>
        </authorList>
    </citation>
    <scope>GENOME REANNOTATION</scope>
    <source>
        <strain>cv. Columbia</strain>
    </source>
</reference>
<reference key="3">
    <citation type="journal article" date="2002" name="Science">
        <title>Functional annotation of a full-length Arabidopsis cDNA collection.</title>
        <authorList>
            <person name="Seki M."/>
            <person name="Narusaka M."/>
            <person name="Kamiya A."/>
            <person name="Ishida J."/>
            <person name="Satou M."/>
            <person name="Sakurai T."/>
            <person name="Nakajima M."/>
            <person name="Enju A."/>
            <person name="Akiyama K."/>
            <person name="Oono Y."/>
            <person name="Muramatsu M."/>
            <person name="Hayashizaki Y."/>
            <person name="Kawai J."/>
            <person name="Carninci P."/>
            <person name="Itoh M."/>
            <person name="Ishii Y."/>
            <person name="Arakawa T."/>
            <person name="Shibata K."/>
            <person name="Shinagawa A."/>
            <person name="Shinozaki K."/>
        </authorList>
    </citation>
    <scope>NUCLEOTIDE SEQUENCE [LARGE SCALE MRNA]</scope>
    <source>
        <strain>cv. Columbia</strain>
    </source>
</reference>
<reference key="4">
    <citation type="journal article" date="2003" name="Science">
        <title>Empirical analysis of transcriptional activity in the Arabidopsis genome.</title>
        <authorList>
            <person name="Yamada K."/>
            <person name="Lim J."/>
            <person name="Dale J.M."/>
            <person name="Chen H."/>
            <person name="Shinn P."/>
            <person name="Palm C.J."/>
            <person name="Southwick A.M."/>
            <person name="Wu H.C."/>
            <person name="Kim C.J."/>
            <person name="Nguyen M."/>
            <person name="Pham P.K."/>
            <person name="Cheuk R.F."/>
            <person name="Karlin-Newmann G."/>
            <person name="Liu S.X."/>
            <person name="Lam B."/>
            <person name="Sakano H."/>
            <person name="Wu T."/>
            <person name="Yu G."/>
            <person name="Miranda M."/>
            <person name="Quach H.L."/>
            <person name="Tripp M."/>
            <person name="Chang C.H."/>
            <person name="Lee J.M."/>
            <person name="Toriumi M.J."/>
            <person name="Chan M.M."/>
            <person name="Tang C.C."/>
            <person name="Onodera C.S."/>
            <person name="Deng J.M."/>
            <person name="Akiyama K."/>
            <person name="Ansari Y."/>
            <person name="Arakawa T."/>
            <person name="Banh J."/>
            <person name="Banno F."/>
            <person name="Bowser L."/>
            <person name="Brooks S.Y."/>
            <person name="Carninci P."/>
            <person name="Chao Q."/>
            <person name="Choy N."/>
            <person name="Enju A."/>
            <person name="Goldsmith A.D."/>
            <person name="Gurjal M."/>
            <person name="Hansen N.F."/>
            <person name="Hayashizaki Y."/>
            <person name="Johnson-Hopson C."/>
            <person name="Hsuan V.W."/>
            <person name="Iida K."/>
            <person name="Karnes M."/>
            <person name="Khan S."/>
            <person name="Koesema E."/>
            <person name="Ishida J."/>
            <person name="Jiang P.X."/>
            <person name="Jones T."/>
            <person name="Kawai J."/>
            <person name="Kamiya A."/>
            <person name="Meyers C."/>
            <person name="Nakajima M."/>
            <person name="Narusaka M."/>
            <person name="Seki M."/>
            <person name="Sakurai T."/>
            <person name="Satou M."/>
            <person name="Tamse R."/>
            <person name="Vaysberg M."/>
            <person name="Wallender E.K."/>
            <person name="Wong C."/>
            <person name="Yamamura Y."/>
            <person name="Yuan S."/>
            <person name="Shinozaki K."/>
            <person name="Davis R.W."/>
            <person name="Theologis A."/>
            <person name="Ecker J.R."/>
        </authorList>
    </citation>
    <scope>NUCLEOTIDE SEQUENCE [LARGE SCALE MRNA]</scope>
    <source>
        <strain>cv. Columbia</strain>
    </source>
</reference>
<reference key="5">
    <citation type="journal article" date="2004" name="Plant Cell">
        <title>Genome-wide analysis of Arabidopsis pentatricopeptide repeat proteins reveals their essential role in organelle biogenesis.</title>
        <authorList>
            <person name="Lurin C."/>
            <person name="Andres C."/>
            <person name="Aubourg S."/>
            <person name="Bellaoui M."/>
            <person name="Bitton F."/>
            <person name="Bruyere C."/>
            <person name="Caboche M."/>
            <person name="Debast C."/>
            <person name="Gualberto J."/>
            <person name="Hoffmann B."/>
            <person name="Lecharny A."/>
            <person name="Le Ret M."/>
            <person name="Martin-Magniette M.-L."/>
            <person name="Mireau H."/>
            <person name="Peeters N."/>
            <person name="Renou J.-P."/>
            <person name="Szurek B."/>
            <person name="Taconnat L."/>
            <person name="Small I."/>
        </authorList>
    </citation>
    <scope>GENE FAMILY</scope>
</reference>
<organism>
    <name type="scientific">Arabidopsis thaliana</name>
    <name type="common">Mouse-ear cress</name>
    <dbReference type="NCBI Taxonomy" id="3702"/>
    <lineage>
        <taxon>Eukaryota</taxon>
        <taxon>Viridiplantae</taxon>
        <taxon>Streptophyta</taxon>
        <taxon>Embryophyta</taxon>
        <taxon>Tracheophyta</taxon>
        <taxon>Spermatophyta</taxon>
        <taxon>Magnoliopsida</taxon>
        <taxon>eudicotyledons</taxon>
        <taxon>Gunneridae</taxon>
        <taxon>Pentapetalae</taxon>
        <taxon>rosids</taxon>
        <taxon>malvids</taxon>
        <taxon>Brassicales</taxon>
        <taxon>Brassicaceae</taxon>
        <taxon>Camelineae</taxon>
        <taxon>Arabidopsis</taxon>
    </lineage>
</organism>
<feature type="chain" id="PRO_0000363534" description="Pentatricopeptide repeat-containing protein At5g25630">
    <location>
        <begin position="1"/>
        <end position="574"/>
    </location>
</feature>
<feature type="repeat" description="PPR 1">
    <location>
        <begin position="44"/>
        <end position="78"/>
    </location>
</feature>
<feature type="repeat" description="PPR 2">
    <location>
        <begin position="79"/>
        <end position="113"/>
    </location>
</feature>
<feature type="repeat" description="PPR 3">
    <location>
        <begin position="114"/>
        <end position="148"/>
    </location>
</feature>
<feature type="repeat" description="PPR 4">
    <location>
        <begin position="149"/>
        <end position="183"/>
    </location>
</feature>
<feature type="repeat" description="PPR 5">
    <location>
        <begin position="187"/>
        <end position="221"/>
    </location>
</feature>
<feature type="repeat" description="PPR 6">
    <location>
        <begin position="222"/>
        <end position="258"/>
    </location>
</feature>
<feature type="repeat" description="PPR 7">
    <location>
        <begin position="259"/>
        <end position="293"/>
    </location>
</feature>
<feature type="repeat" description="PPR 8">
    <location>
        <begin position="294"/>
        <end position="328"/>
    </location>
</feature>
<feature type="repeat" description="PPR 9">
    <location>
        <begin position="329"/>
        <end position="363"/>
    </location>
</feature>
<feature type="repeat" description="PPR 10">
    <location>
        <begin position="364"/>
        <end position="394"/>
    </location>
</feature>
<feature type="repeat" description="PPR 11">
    <location>
        <begin position="398"/>
        <end position="432"/>
    </location>
</feature>
<feature type="repeat" description="PPR 12">
    <location>
        <begin position="433"/>
        <end position="467"/>
    </location>
</feature>
<feature type="region of interest" description="Disordered" evidence="1">
    <location>
        <begin position="1"/>
        <end position="25"/>
    </location>
</feature>
<feature type="compositionally biased region" description="Basic and acidic residues" evidence="1">
    <location>
        <begin position="1"/>
        <end position="21"/>
    </location>
</feature>
<feature type="sequence conflict" description="In Ref. 3; BAC41864 and 4; AAO64862." evidence="2" ref="3 4">
    <original>E</original>
    <variation>G</variation>
    <location>
        <position position="380"/>
    </location>
</feature>
<gene>
    <name type="ordered locus">At5g25630</name>
    <name type="ORF">T14C9_170</name>
</gene>
<protein>
    <recommendedName>
        <fullName>Pentatricopeptide repeat-containing protein At5g25630</fullName>
    </recommendedName>
</protein>
<sequence length="574" mass="63894">MEDVNQEKKKVPPMSEPERSTPIKTTGGQYRFCKSCVEGSSCRTVRSRTKLMNVLIERGRPHEAQTVFKTLAETGHRPSLISYTTLLAAMTVQKQYGSISSIVSEVEQSGTKLDSIFFNAVINAFSESGNMEDAVQALLKMKELGLNPTTSTYNTLIKGYGIAGKPERSSELLDLMLEEGNVDVGPNIRTFNVLVQAWCKKKKVEEAWEVVKKMEECGVRPDTVTYNTIATCYVQKGETVRAESEVVEKMVMKEKAKPNGRTCGIVVGGYCREGRVRDGLRFVRRMKEMRVEANLVVFNSLINGFVEVMDRDGIDEVLTLMKECNVKADVITYSTVMNAWSSAGYMEKAAQVFKEMVKAGVKPDAHAYSILAKGYVRAKEPKKAEELLETLIVESRPNVVIFTTVISGWCSNGSMDDAMRVFNKMCKFGVSPNIKTFETLMWGYLEVKQPWKAEEVLQMMRGCGVKPENSTFLLLAEAWRVAGLTDESNKAINALKCKDIEIAKLEKLYQKQSSGSSFNLLQIPVGKRELPTAKAMNLSACKLGARVPIICQKQSQAQFGISGQFVHSCTVFLS</sequence>
<proteinExistence type="evidence at transcript level"/>
<name>PP397_ARATH</name>
<keyword id="KW-0025">Alternative splicing</keyword>
<keyword id="KW-1185">Reference proteome</keyword>
<keyword id="KW-0677">Repeat</keyword>
<evidence type="ECO:0000256" key="1">
    <source>
        <dbReference type="SAM" id="MobiDB-lite"/>
    </source>
</evidence>
<evidence type="ECO:0000305" key="2"/>
<comment type="alternative products">
    <event type="alternative splicing"/>
    <isoform>
        <id>Q8GZ63-1</id>
        <name>1</name>
        <sequence type="displayed"/>
    </isoform>
    <text>A number of isoforms are produced. According to EST sequences.</text>
</comment>
<comment type="similarity">
    <text evidence="2">Belongs to the PPR family. P subfamily.</text>
</comment>
<comment type="online information" name="Pentatricopeptide repeat proteins">
    <link uri="https://ppr.plantenergy.uwa.edu.au"/>
</comment>
<dbReference type="EMBL" id="AC006601">
    <property type="status" value="NOT_ANNOTATED_CDS"/>
    <property type="molecule type" value="Genomic_DNA"/>
</dbReference>
<dbReference type="EMBL" id="CP002688">
    <property type="protein sequence ID" value="AED93475.1"/>
    <property type="molecule type" value="Genomic_DNA"/>
</dbReference>
<dbReference type="EMBL" id="AK117187">
    <property type="protein sequence ID" value="BAC41864.1"/>
    <property type="molecule type" value="mRNA"/>
</dbReference>
<dbReference type="EMBL" id="BT005927">
    <property type="protein sequence ID" value="AAO64862.1"/>
    <property type="molecule type" value="mRNA"/>
</dbReference>
<dbReference type="RefSeq" id="NP_197945.2">
    <molecule id="Q8GZ63-1"/>
    <property type="nucleotide sequence ID" value="NM_122474.4"/>
</dbReference>
<dbReference type="SMR" id="Q8GZ63"/>
<dbReference type="FunCoup" id="Q8GZ63">
    <property type="interactions" value="1082"/>
</dbReference>
<dbReference type="STRING" id="3702.Q8GZ63"/>
<dbReference type="iPTMnet" id="Q8GZ63"/>
<dbReference type="ProteomicsDB" id="249278">
    <molecule id="Q8GZ63-1"/>
</dbReference>
<dbReference type="EnsemblPlants" id="AT5G25630.1">
    <molecule id="Q8GZ63-1"/>
    <property type="protein sequence ID" value="AT5G25630.1"/>
    <property type="gene ID" value="AT5G25630"/>
</dbReference>
<dbReference type="GeneID" id="832639"/>
<dbReference type="Gramene" id="AT5G25630.1">
    <molecule id="Q8GZ63-1"/>
    <property type="protein sequence ID" value="AT5G25630.1"/>
    <property type="gene ID" value="AT5G25630"/>
</dbReference>
<dbReference type="KEGG" id="ath:AT5G25630"/>
<dbReference type="Araport" id="AT5G25630"/>
<dbReference type="TAIR" id="AT5G25630"/>
<dbReference type="eggNOG" id="KOG4197">
    <property type="taxonomic scope" value="Eukaryota"/>
</dbReference>
<dbReference type="HOGENOM" id="CLU_002706_49_0_1"/>
<dbReference type="InParanoid" id="Q8GZ63"/>
<dbReference type="OrthoDB" id="185373at2759"/>
<dbReference type="PRO" id="PR:Q8GZ63"/>
<dbReference type="Proteomes" id="UP000006548">
    <property type="component" value="Chromosome 5"/>
</dbReference>
<dbReference type="ExpressionAtlas" id="Q8GZ63">
    <property type="expression patterns" value="baseline and differential"/>
</dbReference>
<dbReference type="Gene3D" id="1.25.40.10">
    <property type="entry name" value="Tetratricopeptide repeat domain"/>
    <property type="match status" value="4"/>
</dbReference>
<dbReference type="InterPro" id="IPR002885">
    <property type="entry name" value="Pentatricopeptide_rpt"/>
</dbReference>
<dbReference type="InterPro" id="IPR011990">
    <property type="entry name" value="TPR-like_helical_dom_sf"/>
</dbReference>
<dbReference type="NCBIfam" id="TIGR00756">
    <property type="entry name" value="PPR"/>
    <property type="match status" value="6"/>
</dbReference>
<dbReference type="PANTHER" id="PTHR47931">
    <property type="entry name" value="OS01G0228400 PROTEIN"/>
    <property type="match status" value="1"/>
</dbReference>
<dbReference type="PANTHER" id="PTHR47931:SF1">
    <property type="entry name" value="PPR CONTAINING PLANT-LIKE PROTEIN"/>
    <property type="match status" value="1"/>
</dbReference>
<dbReference type="Pfam" id="PF01535">
    <property type="entry name" value="PPR"/>
    <property type="match status" value="1"/>
</dbReference>
<dbReference type="Pfam" id="PF13041">
    <property type="entry name" value="PPR_2"/>
    <property type="match status" value="4"/>
</dbReference>
<dbReference type="SUPFAM" id="SSF48452">
    <property type="entry name" value="TPR-like"/>
    <property type="match status" value="1"/>
</dbReference>
<dbReference type="PROSITE" id="PS51375">
    <property type="entry name" value="PPR"/>
    <property type="match status" value="12"/>
</dbReference>